<organism>
    <name type="scientific">Saimiri sciureus</name>
    <name type="common">Common squirrel monkey</name>
    <dbReference type="NCBI Taxonomy" id="9521"/>
    <lineage>
        <taxon>Eukaryota</taxon>
        <taxon>Metazoa</taxon>
        <taxon>Chordata</taxon>
        <taxon>Craniata</taxon>
        <taxon>Vertebrata</taxon>
        <taxon>Euteleostomi</taxon>
        <taxon>Mammalia</taxon>
        <taxon>Eutheria</taxon>
        <taxon>Euarchontoglires</taxon>
        <taxon>Primates</taxon>
        <taxon>Haplorrhini</taxon>
        <taxon>Platyrrhini</taxon>
        <taxon>Cebidae</taxon>
        <taxon>Saimiriinae</taxon>
        <taxon>Saimiri</taxon>
    </lineage>
</organism>
<name>TAZ_SAISC</name>
<accession>Q6IV78</accession>
<proteinExistence type="inferred from homology"/>
<gene>
    <name type="primary">TAZ</name>
</gene>
<protein>
    <recommendedName>
        <fullName>Tafazzin</fullName>
        <shortName>Taz</shortName>
        <ecNumber evidence="2">2.3.1.-</ecNumber>
    </recommendedName>
</protein>
<reference key="1">
    <citation type="journal article" date="2005" name="Am. J. Med. Genet. A">
        <title>Barth syndrome: TAZ gene mutations, mRNAs, and evolution.</title>
        <authorList>
            <person name="Gonzalez I.L."/>
        </authorList>
    </citation>
    <scope>NUCLEOTIDE SEQUENCE [GENOMIC DNA]</scope>
</reference>
<sequence length="262" mass="30180">MPLHVKWPFPAVPPLTWTLASSVVMGLVGTYSCFWTKYMNHLTVHNKEVLYELIENRGPATPLITVSNHQSCMDDPHLWGILKLRHIWNLKLMRWTPAAADICFTKELHSHFFSLGKCVPVCRGDGVYQKGMDFILEKLNHGDWVHIFPEGKVNMSSEFLRFKWGIGRLIAECHLNPIILPLWHVGMNDVLPNSPPYFPRFGQKITVLIGKPFSALPVLERLRAENKSAVEMRKALTDFIQEEFQRLKTQAEQLHNHLQPGR</sequence>
<comment type="function">
    <text evidence="1 2 4 5">Acyltransferase required to remodel newly synthesized phospholipid cardiolipin (1',3'-bis-[1,2-diacyl-sn-glycero-3-phospho]-glycerol or CL), a key component of the mitochondrial inner membrane, with tissue specific acyl chains necessary for adequate mitochondrial function (By similarity). Its role in cellular physiology is to improve mitochondrial performance (By similarity). CL is critical for the coassembly of lipids and proteins in mitochondrial membranes, for instance, remodeling of the acyl groups of CL in the mitochondrial inner membrane affects the assembly and stability of respiratory chain complex IV and its supercomplex forms (By similarity). Catalyzes the transacylation between phospholipids and lysophospholipids, with the highest rate being between phosphatidylcholine (1,2-diacyl-sn-glycero-3-phosphocholine or PC) and CL. Catalyzes both 1-acyl-sn-glycero-3-phosphocholine (lysophosphatidylcholine or LPC) reacylation and PC-CL transacylation, that means, it exchanges acyl groups between CL and PC by a combination of forward and reverse transacylations. Also catalyzes transacylations between other phospholipids such as phosphatidylethanolamine (1,2-diacyl-sn-glycero-3-phosphoethanolamine or PE) and CL, between PC and PE, and between PC and phosphatidate (1,2-diacyl-sn-glycero-3-phosphate or PA), although at lower rate. Not regiospecific, it transfers acyl groups into any of the sn-1 and sn-2 positions of the monolysocardiolipin (MLCL), which is an important prerequisite for uniformity and symmetry in CL acyl distribution. Cannot transacylate dilysocardiolipin (DLCL), thus, the role of MLCL is limited to that of an acyl acceptor. CoA-independent, it can reshuffle molecular species within a single phospholipid class. Redistributes fatty acids between MLCL, CL, and other lipids, which prolongs the half-life of CL. Its action is completely reversible, which allows for cyclic changes, such as fission and fusion or bending and flattening of the membrane. Hence, by contributing to the flexibility of the lipid composition, it plays an important role in the dynamics of mitochondria membranes. Essential for the final stage of spermatogenesis, spermatid individualization (By similarity). Required for the initiation of mitophagy (By similarity). Required to ensure progression of spermatocytes through meiosis (By similarity).</text>
</comment>
<comment type="catalytic activity">
    <reaction evidence="2">
        <text>a 1-acyl-sn-glycero-3-phosphate + a 1,2-diacyl-sn-glycero-3-phospho-(1'-sn-glycerol) = 1-acyl-sn-glycero-3-phospho-(1'-sn-glycerol) + a 1,2-diacyl-sn-glycero-3-phosphate</text>
        <dbReference type="Rhea" id="RHEA:67748"/>
        <dbReference type="ChEBI" id="CHEBI:57970"/>
        <dbReference type="ChEBI" id="CHEBI:58608"/>
        <dbReference type="ChEBI" id="CHEBI:64716"/>
        <dbReference type="ChEBI" id="CHEBI:64840"/>
    </reaction>
    <physiologicalReaction direction="left-to-right" evidence="2">
        <dbReference type="Rhea" id="RHEA:67749"/>
    </physiologicalReaction>
    <physiologicalReaction direction="right-to-left" evidence="2">
        <dbReference type="Rhea" id="RHEA:67750"/>
    </physiologicalReaction>
</comment>
<comment type="catalytic activity">
    <reaction evidence="2">
        <text>1-hexadecanoyl-2-(9Z,12Z-octadecadienoyl)-sn-glycero-3-phospho-(1'-sn-glycerol) + 1-(9Z-octadecenoyl)-sn-glycero-3-phosphate = 1-(9Z)-octadecenoyl-2-(9Z,12Z)-octadecadienoyl-sn-glycero-3-phosphate + 1-hexadecanoyl-sn-glycero-3-phospho-(1'-sn-glycerol)</text>
        <dbReference type="Rhea" id="RHEA:67752"/>
        <dbReference type="ChEBI" id="CHEBI:72840"/>
        <dbReference type="ChEBI" id="CHEBI:74544"/>
        <dbReference type="ChEBI" id="CHEBI:74563"/>
        <dbReference type="ChEBI" id="CHEBI:75158"/>
    </reaction>
    <physiologicalReaction direction="left-to-right" evidence="2">
        <dbReference type="Rhea" id="RHEA:67753"/>
    </physiologicalReaction>
    <physiologicalReaction direction="right-to-left" evidence="2">
        <dbReference type="Rhea" id="RHEA:67754"/>
    </physiologicalReaction>
</comment>
<comment type="catalytic activity">
    <reaction evidence="2">
        <text>1'-[1,2-diacyl-sn-glycero-3-phospho],3'-[1-acyl-sn-glycero-3-phospho]-glycerol + a 1,2-diacyl-sn-glycero-3-phosphocholine = a cardiolipin + a 1-acyl-sn-glycero-3-phosphocholine</text>
        <dbReference type="Rhea" id="RHEA:33731"/>
        <dbReference type="ChEBI" id="CHEBI:57643"/>
        <dbReference type="ChEBI" id="CHEBI:58168"/>
        <dbReference type="ChEBI" id="CHEBI:62237"/>
        <dbReference type="ChEBI" id="CHEBI:64743"/>
    </reaction>
    <physiologicalReaction direction="left-to-right" evidence="2">
        <dbReference type="Rhea" id="RHEA:33732"/>
    </physiologicalReaction>
    <physiologicalReaction direction="right-to-left" evidence="2">
        <dbReference type="Rhea" id="RHEA:33733"/>
    </physiologicalReaction>
</comment>
<comment type="catalytic activity">
    <reaction evidence="2">
        <text>1-hexadecanoyl-2-(9Z,12Z-octadecadienoyl)-sn-glycero-3-phosphocholine + 1-hexadecanoyl-sn-glycero-3-phosphocholine = 2-(9Z,12Z-octadecadienoyl)-sn-glycero-3-phosphocholine + 1,2-dihexadecanoyl-sn-glycero-3-phosphocholine</text>
        <dbReference type="Rhea" id="RHEA:68988"/>
        <dbReference type="ChEBI" id="CHEBI:72998"/>
        <dbReference type="ChEBI" id="CHEBI:72999"/>
        <dbReference type="ChEBI" id="CHEBI:73002"/>
        <dbReference type="ChEBI" id="CHEBI:76084"/>
    </reaction>
    <physiologicalReaction direction="left-to-right" evidence="2">
        <dbReference type="Rhea" id="RHEA:68989"/>
    </physiologicalReaction>
    <physiologicalReaction direction="right-to-left" evidence="2">
        <dbReference type="Rhea" id="RHEA:68990"/>
    </physiologicalReaction>
</comment>
<comment type="catalytic activity">
    <reaction evidence="2">
        <text>1,2-di-(9Z-octadecenoyl)-sn-glycero-3-phosphocholine + 1-hexadecanoyl-sn-glycero-3-phosphocholine = 1-hexadecanoyl-2-(9Z-octadecenoyl)-sn-glycero-3-phosphocholine + 1-(9Z-octadecenoyl)-sn-glycero-3-phosphocholine</text>
        <dbReference type="Rhea" id="RHEA:43816"/>
        <dbReference type="ChEBI" id="CHEBI:28610"/>
        <dbReference type="ChEBI" id="CHEBI:72998"/>
        <dbReference type="ChEBI" id="CHEBI:73001"/>
        <dbReference type="ChEBI" id="CHEBI:74669"/>
    </reaction>
    <physiologicalReaction direction="left-to-right" evidence="2">
        <dbReference type="Rhea" id="RHEA:43817"/>
    </physiologicalReaction>
    <physiologicalReaction direction="right-to-left" evidence="2">
        <dbReference type="Rhea" id="RHEA:43818"/>
    </physiologicalReaction>
</comment>
<comment type="pathway">
    <text evidence="1">Phospholipid metabolism.</text>
</comment>
<comment type="subunit">
    <text evidence="2">Associates with multiple protein complexes.</text>
</comment>
<comment type="subcellular location">
    <subcellularLocation>
        <location evidence="2">Mitochondrion outer membrane</location>
        <topology evidence="2">Peripheral membrane protein</topology>
        <orientation evidence="2">Intermembrane side</orientation>
    </subcellularLocation>
    <subcellularLocation>
        <location evidence="2">Mitochondrion inner membrane</location>
        <topology evidence="2">Peripheral membrane protein</topology>
        <orientation evidence="2">Intermembrane side</orientation>
    </subcellularLocation>
</comment>
<comment type="domain">
    <text evidence="3">The HXXXXD motif is essential for acyltransferase activity.</text>
</comment>
<comment type="miscellaneous">
    <text evidence="2">The enzyme was named after a masochistic character Tafazzi, once popular on Italian television, apparently due to the difficulty encountered for its identification and characterization.</text>
</comment>
<comment type="similarity">
    <text evidence="7">Belongs to the taffazin family.</text>
</comment>
<feature type="chain" id="PRO_0000220932" description="Tafazzin">
    <location>
        <begin position="1"/>
        <end position="262"/>
    </location>
</feature>
<feature type="topological domain" description="Mitochondrial intermembrane" evidence="2">
    <location>
        <begin position="1"/>
        <end position="14"/>
    </location>
</feature>
<feature type="intramembrane region" evidence="6">
    <location>
        <begin position="15"/>
        <end position="35"/>
    </location>
</feature>
<feature type="topological domain" description="Mitochondrial intermembrane" evidence="2">
    <location>
        <begin position="36"/>
        <end position="262"/>
    </location>
</feature>
<feature type="region of interest" description="Mitochondrial targeting sequence" evidence="2">
    <location>
        <begin position="82"/>
        <end position="92"/>
    </location>
</feature>
<feature type="region of interest" description="Mitochondrial targeting sequence" evidence="2">
    <location>
        <begin position="155"/>
        <end position="190"/>
    </location>
</feature>
<feature type="short sequence motif" description="HXXXXD motif" evidence="3">
    <location>
        <begin position="69"/>
        <end position="74"/>
    </location>
</feature>
<keyword id="KW-0012">Acyltransferase</keyword>
<keyword id="KW-0443">Lipid metabolism</keyword>
<keyword id="KW-0472">Membrane</keyword>
<keyword id="KW-0496">Mitochondrion</keyword>
<keyword id="KW-0999">Mitochondrion inner membrane</keyword>
<keyword id="KW-1000">Mitochondrion outer membrane</keyword>
<keyword id="KW-0808">Transferase</keyword>
<evidence type="ECO:0000250" key="1">
    <source>
        <dbReference type="UniProtKB" id="Q06510"/>
    </source>
</evidence>
<evidence type="ECO:0000250" key="2">
    <source>
        <dbReference type="UniProtKB" id="Q16635"/>
    </source>
</evidence>
<evidence type="ECO:0000250" key="3">
    <source>
        <dbReference type="UniProtKB" id="Q3TFD2"/>
    </source>
</evidence>
<evidence type="ECO:0000250" key="4">
    <source>
        <dbReference type="UniProtKB" id="Q91WF0"/>
    </source>
</evidence>
<evidence type="ECO:0000250" key="5">
    <source>
        <dbReference type="UniProtKB" id="Q9V6G5"/>
    </source>
</evidence>
<evidence type="ECO:0000255" key="6"/>
<evidence type="ECO:0000305" key="7"/>
<dbReference type="EC" id="2.3.1.-" evidence="2"/>
<dbReference type="EMBL" id="AY621058">
    <property type="protein sequence ID" value="AAT45910.1"/>
    <property type="molecule type" value="Genomic_DNA"/>
</dbReference>
<dbReference type="EMBL" id="AY621056">
    <property type="protein sequence ID" value="AAT45910.1"/>
    <property type="status" value="JOINED"/>
    <property type="molecule type" value="Genomic_DNA"/>
</dbReference>
<dbReference type="EMBL" id="AY621057">
    <property type="protein sequence ID" value="AAT45910.1"/>
    <property type="status" value="JOINED"/>
    <property type="molecule type" value="Genomic_DNA"/>
</dbReference>
<dbReference type="SMR" id="Q6IV78"/>
<dbReference type="GO" id="GO:0005743">
    <property type="term" value="C:mitochondrial inner membrane"/>
    <property type="evidence" value="ECO:0007669"/>
    <property type="project" value="UniProtKB-SubCell"/>
</dbReference>
<dbReference type="GO" id="GO:0005741">
    <property type="term" value="C:mitochondrial outer membrane"/>
    <property type="evidence" value="ECO:0007669"/>
    <property type="project" value="UniProtKB-SubCell"/>
</dbReference>
<dbReference type="GO" id="GO:0005739">
    <property type="term" value="C:mitochondrion"/>
    <property type="evidence" value="ECO:0000250"/>
    <property type="project" value="UniProtKB"/>
</dbReference>
<dbReference type="GO" id="GO:0047184">
    <property type="term" value="F:1-acylglycerophosphocholine O-acyltransferase activity"/>
    <property type="evidence" value="ECO:0007669"/>
    <property type="project" value="TreeGrafter"/>
</dbReference>
<dbReference type="GO" id="GO:0035965">
    <property type="term" value="P:cardiolipin acyl-chain remodeling"/>
    <property type="evidence" value="ECO:0000250"/>
    <property type="project" value="UniProtKB"/>
</dbReference>
<dbReference type="GO" id="GO:0007007">
    <property type="term" value="P:inner mitochondrial membrane organization"/>
    <property type="evidence" value="ECO:0007669"/>
    <property type="project" value="TreeGrafter"/>
</dbReference>
<dbReference type="CDD" id="cd07989">
    <property type="entry name" value="LPLAT_AGPAT-like"/>
    <property type="match status" value="1"/>
</dbReference>
<dbReference type="InterPro" id="IPR002123">
    <property type="entry name" value="Plipid/glycerol_acylTrfase"/>
</dbReference>
<dbReference type="InterPro" id="IPR000872">
    <property type="entry name" value="Tafazzin"/>
</dbReference>
<dbReference type="PANTHER" id="PTHR12497:SF0">
    <property type="entry name" value="TAFAZZIN"/>
    <property type="match status" value="1"/>
</dbReference>
<dbReference type="PANTHER" id="PTHR12497">
    <property type="entry name" value="TAZ PROTEIN TAFAZZIN"/>
    <property type="match status" value="1"/>
</dbReference>
<dbReference type="Pfam" id="PF01553">
    <property type="entry name" value="Acyltransferase"/>
    <property type="match status" value="1"/>
</dbReference>
<dbReference type="PRINTS" id="PR00979">
    <property type="entry name" value="TAFAZZIN"/>
</dbReference>
<dbReference type="SMART" id="SM00563">
    <property type="entry name" value="PlsC"/>
    <property type="match status" value="1"/>
</dbReference>
<dbReference type="SUPFAM" id="SSF69593">
    <property type="entry name" value="Glycerol-3-phosphate (1)-acyltransferase"/>
    <property type="match status" value="1"/>
</dbReference>